<name>RS8_BURP6</name>
<accession>A3NEG5</accession>
<protein>
    <recommendedName>
        <fullName evidence="1">Small ribosomal subunit protein uS8</fullName>
    </recommendedName>
    <alternativeName>
        <fullName evidence="2">30S ribosomal protein S8</fullName>
    </alternativeName>
</protein>
<proteinExistence type="inferred from homology"/>
<reference key="1">
    <citation type="journal article" date="2010" name="Genome Biol. Evol.">
        <title>Continuing evolution of Burkholderia mallei through genome reduction and large-scale rearrangements.</title>
        <authorList>
            <person name="Losada L."/>
            <person name="Ronning C.M."/>
            <person name="DeShazer D."/>
            <person name="Woods D."/>
            <person name="Fedorova N."/>
            <person name="Kim H.S."/>
            <person name="Shabalina S.A."/>
            <person name="Pearson T.R."/>
            <person name="Brinkac L."/>
            <person name="Tan P."/>
            <person name="Nandi T."/>
            <person name="Crabtree J."/>
            <person name="Badger J."/>
            <person name="Beckstrom-Sternberg S."/>
            <person name="Saqib M."/>
            <person name="Schutzer S.E."/>
            <person name="Keim P."/>
            <person name="Nierman W.C."/>
        </authorList>
    </citation>
    <scope>NUCLEOTIDE SEQUENCE [LARGE SCALE GENOMIC DNA]</scope>
    <source>
        <strain>668</strain>
    </source>
</reference>
<evidence type="ECO:0000255" key="1">
    <source>
        <dbReference type="HAMAP-Rule" id="MF_01302"/>
    </source>
</evidence>
<evidence type="ECO:0000305" key="2"/>
<dbReference type="EMBL" id="CP000570">
    <property type="protein sequence ID" value="ABN84677.1"/>
    <property type="molecule type" value="Genomic_DNA"/>
</dbReference>
<dbReference type="RefSeq" id="WP_004185153.1">
    <property type="nucleotide sequence ID" value="NC_009074.1"/>
</dbReference>
<dbReference type="SMR" id="A3NEG5"/>
<dbReference type="GeneID" id="93061818"/>
<dbReference type="KEGG" id="bpd:BURPS668_3732"/>
<dbReference type="HOGENOM" id="CLU_098428_0_0_4"/>
<dbReference type="GO" id="GO:1990904">
    <property type="term" value="C:ribonucleoprotein complex"/>
    <property type="evidence" value="ECO:0007669"/>
    <property type="project" value="UniProtKB-KW"/>
</dbReference>
<dbReference type="GO" id="GO:0005840">
    <property type="term" value="C:ribosome"/>
    <property type="evidence" value="ECO:0007669"/>
    <property type="project" value="UniProtKB-KW"/>
</dbReference>
<dbReference type="GO" id="GO:0019843">
    <property type="term" value="F:rRNA binding"/>
    <property type="evidence" value="ECO:0007669"/>
    <property type="project" value="UniProtKB-UniRule"/>
</dbReference>
<dbReference type="GO" id="GO:0003735">
    <property type="term" value="F:structural constituent of ribosome"/>
    <property type="evidence" value="ECO:0007669"/>
    <property type="project" value="InterPro"/>
</dbReference>
<dbReference type="GO" id="GO:0006412">
    <property type="term" value="P:translation"/>
    <property type="evidence" value="ECO:0007669"/>
    <property type="project" value="UniProtKB-UniRule"/>
</dbReference>
<dbReference type="FunFam" id="3.30.1370.30:FF:000003">
    <property type="entry name" value="30S ribosomal protein S8"/>
    <property type="match status" value="1"/>
</dbReference>
<dbReference type="FunFam" id="3.30.1490.10:FF:000001">
    <property type="entry name" value="30S ribosomal protein S8"/>
    <property type="match status" value="1"/>
</dbReference>
<dbReference type="Gene3D" id="3.30.1370.30">
    <property type="match status" value="1"/>
</dbReference>
<dbReference type="Gene3D" id="3.30.1490.10">
    <property type="match status" value="1"/>
</dbReference>
<dbReference type="HAMAP" id="MF_01302_B">
    <property type="entry name" value="Ribosomal_uS8_B"/>
    <property type="match status" value="1"/>
</dbReference>
<dbReference type="InterPro" id="IPR000630">
    <property type="entry name" value="Ribosomal_uS8"/>
</dbReference>
<dbReference type="InterPro" id="IPR047863">
    <property type="entry name" value="Ribosomal_uS8_CS"/>
</dbReference>
<dbReference type="InterPro" id="IPR035987">
    <property type="entry name" value="Ribosomal_uS8_sf"/>
</dbReference>
<dbReference type="NCBIfam" id="NF001109">
    <property type="entry name" value="PRK00136.1"/>
    <property type="match status" value="1"/>
</dbReference>
<dbReference type="PANTHER" id="PTHR11758">
    <property type="entry name" value="40S RIBOSOMAL PROTEIN S15A"/>
    <property type="match status" value="1"/>
</dbReference>
<dbReference type="Pfam" id="PF00410">
    <property type="entry name" value="Ribosomal_S8"/>
    <property type="match status" value="1"/>
</dbReference>
<dbReference type="SUPFAM" id="SSF56047">
    <property type="entry name" value="Ribosomal protein S8"/>
    <property type="match status" value="1"/>
</dbReference>
<dbReference type="PROSITE" id="PS00053">
    <property type="entry name" value="RIBOSOMAL_S8"/>
    <property type="match status" value="1"/>
</dbReference>
<keyword id="KW-0687">Ribonucleoprotein</keyword>
<keyword id="KW-0689">Ribosomal protein</keyword>
<keyword id="KW-0694">RNA-binding</keyword>
<keyword id="KW-0699">rRNA-binding</keyword>
<organism>
    <name type="scientific">Burkholderia pseudomallei (strain 668)</name>
    <dbReference type="NCBI Taxonomy" id="320373"/>
    <lineage>
        <taxon>Bacteria</taxon>
        <taxon>Pseudomonadati</taxon>
        <taxon>Pseudomonadota</taxon>
        <taxon>Betaproteobacteria</taxon>
        <taxon>Burkholderiales</taxon>
        <taxon>Burkholderiaceae</taxon>
        <taxon>Burkholderia</taxon>
        <taxon>pseudomallei group</taxon>
    </lineage>
</organism>
<feature type="chain" id="PRO_1000051770" description="Small ribosomal subunit protein uS8">
    <location>
        <begin position="1"/>
        <end position="131"/>
    </location>
</feature>
<gene>
    <name evidence="1" type="primary">rpsH</name>
    <name type="ordered locus">BURPS668_3732</name>
</gene>
<comment type="function">
    <text evidence="1">One of the primary rRNA binding proteins, it binds directly to 16S rRNA central domain where it helps coordinate assembly of the platform of the 30S subunit.</text>
</comment>
<comment type="subunit">
    <text evidence="1">Part of the 30S ribosomal subunit. Contacts proteins S5 and S12.</text>
</comment>
<comment type="similarity">
    <text evidence="1">Belongs to the universal ribosomal protein uS8 family.</text>
</comment>
<sequence length="131" mass="14199">MSMSDPIADMLTRIRNAQMVEKVSVSMPSSKVKVAIAQVLKDEGYIDDFAVKADGAKAELNIALKYYAGRPVIERLERVSKPGLRVYRGRNEIPQVMNGLGVAIVSTPKGVMTDRKARATGVGGEVICYVA</sequence>